<protein>
    <recommendedName>
        <fullName>Membrane-spanning 4-domains subfamily A member 13</fullName>
    </recommendedName>
</protein>
<gene>
    <name type="primary">MS4A13</name>
</gene>
<keyword id="KW-0472">Membrane</keyword>
<keyword id="KW-0675">Receptor</keyword>
<keyword id="KW-1185">Reference proteome</keyword>
<keyword id="KW-0812">Transmembrane</keyword>
<keyword id="KW-1133">Transmembrane helix</keyword>
<accession>Q2YDM3</accession>
<name>M4A13_BOVIN</name>
<sequence>MTGIFCIFMWYLLLILYMGQIKGVFGTYEPITYKTGCSLWGIFFIISGISIIRATWYPSQRQLTCAMLENILCMILAIISMILTIVELSTFKSVSYRNYGQAKLGRQISRVLLSFYPLEVSMALTYSIFGCVGLCRKKEDARTADTEEVEDAF</sequence>
<reference key="1">
    <citation type="submission" date="2005-11" db="EMBL/GenBank/DDBJ databases">
        <authorList>
            <consortium name="NIH - Mammalian Gene Collection (MGC) project"/>
        </authorList>
    </citation>
    <scope>NUCLEOTIDE SEQUENCE [LARGE SCALE MRNA]</scope>
    <source>
        <strain>Crossbred X Angus</strain>
        <tissue>Liver</tissue>
    </source>
</reference>
<evidence type="ECO:0000250" key="1"/>
<evidence type="ECO:0000255" key="2"/>
<evidence type="ECO:0000305" key="3"/>
<comment type="function">
    <text evidence="1">May be involved in signal transduction as a component of a multimeric receptor complex.</text>
</comment>
<comment type="subcellular location">
    <subcellularLocation>
        <location evidence="3">Membrane</location>
        <topology evidence="3">Multi-pass membrane protein</topology>
    </subcellularLocation>
</comment>
<comment type="similarity">
    <text evidence="3">Belongs to the MS4A family.</text>
</comment>
<proteinExistence type="evidence at transcript level"/>
<feature type="chain" id="PRO_0000315054" description="Membrane-spanning 4-domains subfamily A member 13">
    <location>
        <begin position="1"/>
        <end position="153"/>
    </location>
</feature>
<feature type="transmembrane region" description="Helical" evidence="2">
    <location>
        <begin position="1"/>
        <end position="21"/>
    </location>
</feature>
<feature type="transmembrane region" description="Helical" evidence="2">
    <location>
        <begin position="36"/>
        <end position="56"/>
    </location>
</feature>
<feature type="transmembrane region" description="Helical" evidence="2">
    <location>
        <begin position="71"/>
        <end position="91"/>
    </location>
</feature>
<feature type="transmembrane region" description="Helical" evidence="2">
    <location>
        <begin position="111"/>
        <end position="131"/>
    </location>
</feature>
<organism>
    <name type="scientific">Bos taurus</name>
    <name type="common">Bovine</name>
    <dbReference type="NCBI Taxonomy" id="9913"/>
    <lineage>
        <taxon>Eukaryota</taxon>
        <taxon>Metazoa</taxon>
        <taxon>Chordata</taxon>
        <taxon>Craniata</taxon>
        <taxon>Vertebrata</taxon>
        <taxon>Euteleostomi</taxon>
        <taxon>Mammalia</taxon>
        <taxon>Eutheria</taxon>
        <taxon>Laurasiatheria</taxon>
        <taxon>Artiodactyla</taxon>
        <taxon>Ruminantia</taxon>
        <taxon>Pecora</taxon>
        <taxon>Bovidae</taxon>
        <taxon>Bovinae</taxon>
        <taxon>Bos</taxon>
    </lineage>
</organism>
<dbReference type="EMBL" id="BC110154">
    <property type="protein sequence ID" value="AAI10155.1"/>
    <property type="molecule type" value="mRNA"/>
</dbReference>
<dbReference type="RefSeq" id="NP_001068688.2">
    <property type="nucleotide sequence ID" value="NM_001075220.2"/>
</dbReference>
<dbReference type="SMR" id="Q2YDM3"/>
<dbReference type="FunCoup" id="Q2YDM3">
    <property type="interactions" value="16"/>
</dbReference>
<dbReference type="PaxDb" id="9913-ENSBTAP00000041271"/>
<dbReference type="GeneID" id="505705"/>
<dbReference type="KEGG" id="bta:505705"/>
<dbReference type="CTD" id="503497"/>
<dbReference type="eggNOG" id="ENOG502RTZG">
    <property type="taxonomic scope" value="Eukaryota"/>
</dbReference>
<dbReference type="InParanoid" id="Q2YDM3"/>
<dbReference type="OrthoDB" id="9451513at2759"/>
<dbReference type="Proteomes" id="UP000009136">
    <property type="component" value="Unplaced"/>
</dbReference>
<dbReference type="GO" id="GO:0005886">
    <property type="term" value="C:plasma membrane"/>
    <property type="evidence" value="ECO:0000318"/>
    <property type="project" value="GO_Central"/>
</dbReference>
<dbReference type="GO" id="GO:0007166">
    <property type="term" value="P:cell surface receptor signaling pathway"/>
    <property type="evidence" value="ECO:0000318"/>
    <property type="project" value="GO_Central"/>
</dbReference>